<protein>
    <recommendedName>
        <fullName>E3 ubiquitin-protein ligase Siah1</fullName>
        <ecNumber evidence="3">2.3.2.27</ecNumber>
    </recommendedName>
    <alternativeName>
        <fullName evidence="7">RING-type E3 ubiquitin transferase SIAH1</fullName>
    </alternativeName>
    <alternativeName>
        <fullName>Seven in absentia homolog 1</fullName>
        <shortName>Siah-1</shortName>
    </alternativeName>
</protein>
<gene>
    <name type="primary">siah1</name>
    <name type="ORF">zgc:56026</name>
</gene>
<evidence type="ECO:0000250" key="1"/>
<evidence type="ECO:0000250" key="2">
    <source>
        <dbReference type="UniProtKB" id="P61092"/>
    </source>
</evidence>
<evidence type="ECO:0000250" key="3">
    <source>
        <dbReference type="UniProtKB" id="Q8IUQ4"/>
    </source>
</evidence>
<evidence type="ECO:0000255" key="4">
    <source>
        <dbReference type="PROSITE-ProRule" id="PRU00175"/>
    </source>
</evidence>
<evidence type="ECO:0000255" key="5">
    <source>
        <dbReference type="PROSITE-ProRule" id="PRU00455"/>
    </source>
</evidence>
<evidence type="ECO:0000256" key="6">
    <source>
        <dbReference type="SAM" id="MobiDB-lite"/>
    </source>
</evidence>
<evidence type="ECO:0000305" key="7"/>
<keyword id="KW-0479">Metal-binding</keyword>
<keyword id="KW-1185">Reference proteome</keyword>
<keyword id="KW-0808">Transferase</keyword>
<keyword id="KW-0833">Ubl conjugation pathway</keyword>
<keyword id="KW-0862">Zinc</keyword>
<keyword id="KW-0863">Zinc-finger</keyword>
<accession>Q7ZVG6</accession>
<proteinExistence type="evidence at transcript level"/>
<feature type="chain" id="PRO_0000056167" description="E3 ubiquitin-protein ligase Siah1">
    <location>
        <begin position="1"/>
        <end position="282"/>
    </location>
</feature>
<feature type="zinc finger region" description="RING-type" evidence="4">
    <location>
        <begin position="41"/>
        <end position="76"/>
    </location>
</feature>
<feature type="zinc finger region" description="SIAH-type" evidence="5">
    <location>
        <begin position="93"/>
        <end position="153"/>
    </location>
</feature>
<feature type="region of interest" description="Disordered" evidence="6">
    <location>
        <begin position="1"/>
        <end position="28"/>
    </location>
</feature>
<feature type="region of interest" description="SBD">
    <location>
        <begin position="90"/>
        <end position="282"/>
    </location>
</feature>
<feature type="binding site" evidence="3">
    <location>
        <position position="98"/>
    </location>
    <ligand>
        <name>Zn(2+)</name>
        <dbReference type="ChEBI" id="CHEBI:29105"/>
        <label>1</label>
    </ligand>
</feature>
<feature type="binding site" evidence="3">
    <location>
        <position position="105"/>
    </location>
    <ligand>
        <name>Zn(2+)</name>
        <dbReference type="ChEBI" id="CHEBI:29105"/>
        <label>1</label>
    </ligand>
</feature>
<feature type="binding site" evidence="3">
    <location>
        <position position="117"/>
    </location>
    <ligand>
        <name>Zn(2+)</name>
        <dbReference type="ChEBI" id="CHEBI:29105"/>
        <label>1</label>
    </ligand>
</feature>
<feature type="binding site" evidence="3">
    <location>
        <position position="121"/>
    </location>
    <ligand>
        <name>Zn(2+)</name>
        <dbReference type="ChEBI" id="CHEBI:29105"/>
        <label>1</label>
    </ligand>
</feature>
<feature type="binding site" evidence="3">
    <location>
        <position position="128"/>
    </location>
    <ligand>
        <name>Zn(2+)</name>
        <dbReference type="ChEBI" id="CHEBI:29105"/>
        <label>2</label>
    </ligand>
</feature>
<feature type="binding site" evidence="3">
    <location>
        <position position="135"/>
    </location>
    <ligand>
        <name>Zn(2+)</name>
        <dbReference type="ChEBI" id="CHEBI:29105"/>
        <label>2</label>
    </ligand>
</feature>
<feature type="binding site" evidence="3">
    <location>
        <position position="147"/>
    </location>
    <ligand>
        <name>Zn(2+)</name>
        <dbReference type="ChEBI" id="CHEBI:29105"/>
        <label>2</label>
    </ligand>
</feature>
<feature type="binding site" evidence="3">
    <location>
        <position position="152"/>
    </location>
    <ligand>
        <name>Zn(2+)</name>
        <dbReference type="ChEBI" id="CHEBI:29105"/>
        <label>2</label>
    </ligand>
</feature>
<organism>
    <name type="scientific">Danio rerio</name>
    <name type="common">Zebrafish</name>
    <name type="synonym">Brachydanio rerio</name>
    <dbReference type="NCBI Taxonomy" id="7955"/>
    <lineage>
        <taxon>Eukaryota</taxon>
        <taxon>Metazoa</taxon>
        <taxon>Chordata</taxon>
        <taxon>Craniata</taxon>
        <taxon>Vertebrata</taxon>
        <taxon>Euteleostomi</taxon>
        <taxon>Actinopterygii</taxon>
        <taxon>Neopterygii</taxon>
        <taxon>Teleostei</taxon>
        <taxon>Ostariophysi</taxon>
        <taxon>Cypriniformes</taxon>
        <taxon>Danionidae</taxon>
        <taxon>Danioninae</taxon>
        <taxon>Danio</taxon>
    </lineage>
</organism>
<comment type="function">
    <text evidence="3">E3 ubiquitin-protein ligase that mediates ubiquitination and subsequent proteasomal degradation of target proteins. E3 ubiquitin ligases accept ubiquitin from an E2 ubiquitin-conjugating enzyme in the form of a thioester and then directly transfers the ubiquitin to targeted substrates. It probably triggers the ubiquitin-mediated degradation of different substrates.</text>
</comment>
<comment type="catalytic activity">
    <reaction evidence="3">
        <text>S-ubiquitinyl-[E2 ubiquitin-conjugating enzyme]-L-cysteine + [acceptor protein]-L-lysine = [E2 ubiquitin-conjugating enzyme]-L-cysteine + N(6)-ubiquitinyl-[acceptor protein]-L-lysine.</text>
        <dbReference type="EC" id="2.3.2.27"/>
    </reaction>
</comment>
<comment type="pathway">
    <text evidence="3">Protein modification; protein ubiquitination.</text>
</comment>
<comment type="subunit">
    <text evidence="2">Homodimer.</text>
</comment>
<comment type="domain">
    <text evidence="1">The RING-type zinc finger domain is essential for ubiquitin ligase activity.</text>
</comment>
<comment type="domain">
    <text evidence="1">The SBD domain (substrate-binding domain) mediates the homodimerization and the interaction with substrate proteins. It is related to the TRAF family.</text>
</comment>
<comment type="similarity">
    <text evidence="7">Belongs to the SINA (Seven in absentia) family.</text>
</comment>
<comment type="sequence caution" evidence="7">
    <conflict type="erroneous initiation">
        <sequence resource="EMBL-CDS" id="AAH45870"/>
    </conflict>
    <text>Extended N-terminus.</text>
</comment>
<name>SIAH1_DANRE</name>
<sequence>MSRQTATALPTGTSKCPPSQRVPTLSGTTASNSDLASLFECPVCFDYVLPPILQCQSGHLVCSNCRPKLTCCPTCRGPLGSIRNLAMEKVANSVLFPCKYASSGCEVTLPHTDKAEHEELCEFRPYSCPCPGASCKWQGSLDAVMPHLLHQHKSITTLQGEDIVFLATDINLPGAVDWVMMQSCFGFHFMLVLEKQEKYDGHQQFFAIVQLIGTRKQAENFAYRLELNGHRRRLTWEATPRSIHEGIATAIMNSDCLVFDTSIAQLFAENGNLGINVTISMC</sequence>
<dbReference type="EC" id="2.3.2.27" evidence="3"/>
<dbReference type="EMBL" id="BC045870">
    <property type="protein sequence ID" value="AAH45870.1"/>
    <property type="status" value="ALT_INIT"/>
    <property type="molecule type" value="mRNA"/>
</dbReference>
<dbReference type="RefSeq" id="NP_955815.1">
    <property type="nucleotide sequence ID" value="NM_199521.2"/>
</dbReference>
<dbReference type="SMR" id="Q7ZVG6"/>
<dbReference type="FunCoup" id="Q7ZVG6">
    <property type="interactions" value="2361"/>
</dbReference>
<dbReference type="STRING" id="7955.ENSDARP00000043842"/>
<dbReference type="PaxDb" id="7955-ENSDARP00000043842"/>
<dbReference type="GeneID" id="80955"/>
<dbReference type="KEGG" id="dre:80955"/>
<dbReference type="AGR" id="ZFIN:ZDB-GENE-010319-31"/>
<dbReference type="CTD" id="6477"/>
<dbReference type="ZFIN" id="ZDB-GENE-010319-31">
    <property type="gene designation" value="siah1"/>
</dbReference>
<dbReference type="eggNOG" id="KOG3002">
    <property type="taxonomic scope" value="Eukaryota"/>
</dbReference>
<dbReference type="HOGENOM" id="CLU_028215_0_0_1"/>
<dbReference type="InParanoid" id="Q7ZVG6"/>
<dbReference type="OrthoDB" id="941555at2759"/>
<dbReference type="PhylomeDB" id="Q7ZVG6"/>
<dbReference type="TreeFam" id="TF312976"/>
<dbReference type="Reactome" id="R-DRE-373752">
    <property type="pathway name" value="Netrin-1 signaling"/>
</dbReference>
<dbReference type="Reactome" id="R-DRE-983168">
    <property type="pathway name" value="Antigen processing: Ubiquitination &amp; Proteasome degradation"/>
</dbReference>
<dbReference type="UniPathway" id="UPA00143"/>
<dbReference type="PRO" id="PR:Q7ZVG6"/>
<dbReference type="Proteomes" id="UP000000437">
    <property type="component" value="Chromosome 18"/>
</dbReference>
<dbReference type="GO" id="GO:0005737">
    <property type="term" value="C:cytoplasm"/>
    <property type="evidence" value="ECO:0000318"/>
    <property type="project" value="GO_Central"/>
</dbReference>
<dbReference type="GO" id="GO:0005829">
    <property type="term" value="C:cytosol"/>
    <property type="evidence" value="ECO:0000250"/>
    <property type="project" value="UniProtKB"/>
</dbReference>
<dbReference type="GO" id="GO:0005634">
    <property type="term" value="C:nucleus"/>
    <property type="evidence" value="ECO:0000250"/>
    <property type="project" value="UniProtKB"/>
</dbReference>
<dbReference type="GO" id="GO:0031624">
    <property type="term" value="F:ubiquitin conjugating enzyme binding"/>
    <property type="evidence" value="ECO:0000318"/>
    <property type="project" value="GO_Central"/>
</dbReference>
<dbReference type="GO" id="GO:0061630">
    <property type="term" value="F:ubiquitin protein ligase activity"/>
    <property type="evidence" value="ECO:0000318"/>
    <property type="project" value="GO_Central"/>
</dbReference>
<dbReference type="GO" id="GO:0004842">
    <property type="term" value="F:ubiquitin-protein transferase activity"/>
    <property type="evidence" value="ECO:0000250"/>
    <property type="project" value="UniProtKB"/>
</dbReference>
<dbReference type="GO" id="GO:0008270">
    <property type="term" value="F:zinc ion binding"/>
    <property type="evidence" value="ECO:0000250"/>
    <property type="project" value="UniProtKB"/>
</dbReference>
<dbReference type="GO" id="GO:0051402">
    <property type="term" value="P:neuron apoptotic process"/>
    <property type="evidence" value="ECO:0000250"/>
    <property type="project" value="UniProtKB"/>
</dbReference>
<dbReference type="GO" id="GO:0043161">
    <property type="term" value="P:proteasome-mediated ubiquitin-dependent protein catabolic process"/>
    <property type="evidence" value="ECO:0000250"/>
    <property type="project" value="UniProtKB"/>
</dbReference>
<dbReference type="GO" id="GO:0016567">
    <property type="term" value="P:protein ubiquitination"/>
    <property type="evidence" value="ECO:0007669"/>
    <property type="project" value="UniProtKB-UniPathway"/>
</dbReference>
<dbReference type="GO" id="GO:0006511">
    <property type="term" value="P:ubiquitin-dependent protein catabolic process"/>
    <property type="evidence" value="ECO:0000250"/>
    <property type="project" value="UniProtKB"/>
</dbReference>
<dbReference type="CDD" id="cd03829">
    <property type="entry name" value="Sina"/>
    <property type="match status" value="1"/>
</dbReference>
<dbReference type="FunFam" id="2.60.210.10:FF:000002">
    <property type="entry name" value="E3 ubiquitin-protein ligase"/>
    <property type="match status" value="1"/>
</dbReference>
<dbReference type="FunFam" id="3.30.40.10:FF:000050">
    <property type="entry name" value="E3 ubiquitin-protein ligase"/>
    <property type="match status" value="1"/>
</dbReference>
<dbReference type="FunFam" id="3.30.40.10:FF:000063">
    <property type="entry name" value="E3 ubiquitin-protein ligase"/>
    <property type="match status" value="1"/>
</dbReference>
<dbReference type="Gene3D" id="2.60.210.10">
    <property type="entry name" value="Apoptosis, Tumor Necrosis Factor Receptor Associated Protein 2, Chain A"/>
    <property type="match status" value="1"/>
</dbReference>
<dbReference type="Gene3D" id="3.30.40.10">
    <property type="entry name" value="Zinc/RING finger domain, C3HC4 (zinc finger)"/>
    <property type="match status" value="2"/>
</dbReference>
<dbReference type="InterPro" id="IPR018121">
    <property type="entry name" value="7-in-absentia-prot_TRAF-dom"/>
</dbReference>
<dbReference type="InterPro" id="IPR004162">
    <property type="entry name" value="SINA-like_animal"/>
</dbReference>
<dbReference type="InterPro" id="IPR049548">
    <property type="entry name" value="Sina-like_RING"/>
</dbReference>
<dbReference type="InterPro" id="IPR008974">
    <property type="entry name" value="TRAF-like"/>
</dbReference>
<dbReference type="InterPro" id="IPR001841">
    <property type="entry name" value="Znf_RING"/>
</dbReference>
<dbReference type="InterPro" id="IPR013083">
    <property type="entry name" value="Znf_RING/FYVE/PHD"/>
</dbReference>
<dbReference type="InterPro" id="IPR013010">
    <property type="entry name" value="Znf_SIAH"/>
</dbReference>
<dbReference type="PANTHER" id="PTHR45877:SF7">
    <property type="entry name" value="E3 UBIQUITIN-PROTEIN LIGASE SIAH1"/>
    <property type="match status" value="1"/>
</dbReference>
<dbReference type="PANTHER" id="PTHR45877">
    <property type="entry name" value="E3 UBIQUITIN-PROTEIN LIGASE SIAH2"/>
    <property type="match status" value="1"/>
</dbReference>
<dbReference type="Pfam" id="PF21362">
    <property type="entry name" value="Sina_RING"/>
    <property type="match status" value="1"/>
</dbReference>
<dbReference type="Pfam" id="PF03145">
    <property type="entry name" value="Sina_TRAF"/>
    <property type="match status" value="1"/>
</dbReference>
<dbReference type="Pfam" id="PF21361">
    <property type="entry name" value="Sina_ZnF"/>
    <property type="match status" value="1"/>
</dbReference>
<dbReference type="SUPFAM" id="SSF57850">
    <property type="entry name" value="RING/U-box"/>
    <property type="match status" value="1"/>
</dbReference>
<dbReference type="SUPFAM" id="SSF49599">
    <property type="entry name" value="TRAF domain-like"/>
    <property type="match status" value="1"/>
</dbReference>
<dbReference type="PROSITE" id="PS50089">
    <property type="entry name" value="ZF_RING_2"/>
    <property type="match status" value="1"/>
</dbReference>
<dbReference type="PROSITE" id="PS51081">
    <property type="entry name" value="ZF_SIAH"/>
    <property type="match status" value="1"/>
</dbReference>
<reference key="1">
    <citation type="submission" date="2003-01" db="EMBL/GenBank/DDBJ databases">
        <authorList>
            <consortium name="NIH - Zebrafish Gene Collection (ZGC) project"/>
        </authorList>
    </citation>
    <scope>NUCLEOTIDE SEQUENCE [LARGE SCALE MRNA]</scope>
</reference>